<keyword id="KW-0025">Alternative splicing</keyword>
<keyword id="KW-0223">Dioxygenase</keyword>
<keyword id="KW-0408">Iron</keyword>
<keyword id="KW-0479">Metal-binding</keyword>
<keyword id="KW-0560">Oxidoreductase</keyword>
<keyword id="KW-1185">Reference proteome</keyword>
<organism>
    <name type="scientific">Arabidopsis thaliana</name>
    <name type="common">Mouse-ear cress</name>
    <dbReference type="NCBI Taxonomy" id="3702"/>
    <lineage>
        <taxon>Eukaryota</taxon>
        <taxon>Viridiplantae</taxon>
        <taxon>Streptophyta</taxon>
        <taxon>Embryophyta</taxon>
        <taxon>Tracheophyta</taxon>
        <taxon>Spermatophyta</taxon>
        <taxon>Magnoliopsida</taxon>
        <taxon>eudicotyledons</taxon>
        <taxon>Gunneridae</taxon>
        <taxon>Pentapetalae</taxon>
        <taxon>rosids</taxon>
        <taxon>malvids</taxon>
        <taxon>Brassicales</taxon>
        <taxon>Brassicaceae</taxon>
        <taxon>Camelineae</taxon>
        <taxon>Arabidopsis</taxon>
    </lineage>
</organism>
<name>G2OX8_ARATH</name>
<gene>
    <name type="primary">GA2OX8</name>
    <name type="ordered locus">At4g21200</name>
    <name type="ORF">F7J7.140</name>
</gene>
<reference key="1">
    <citation type="journal article" date="1999" name="Nature">
        <title>Sequence and analysis of chromosome 4 of the plant Arabidopsis thaliana.</title>
        <authorList>
            <person name="Mayer K.F.X."/>
            <person name="Schueller C."/>
            <person name="Wambutt R."/>
            <person name="Murphy G."/>
            <person name="Volckaert G."/>
            <person name="Pohl T."/>
            <person name="Duesterhoeft A."/>
            <person name="Stiekema W."/>
            <person name="Entian K.-D."/>
            <person name="Terryn N."/>
            <person name="Harris B."/>
            <person name="Ansorge W."/>
            <person name="Brandt P."/>
            <person name="Grivell L.A."/>
            <person name="Rieger M."/>
            <person name="Weichselgartner M."/>
            <person name="de Simone V."/>
            <person name="Obermaier B."/>
            <person name="Mache R."/>
            <person name="Mueller M."/>
            <person name="Kreis M."/>
            <person name="Delseny M."/>
            <person name="Puigdomenech P."/>
            <person name="Watson M."/>
            <person name="Schmidtheini T."/>
            <person name="Reichert B."/>
            <person name="Portetelle D."/>
            <person name="Perez-Alonso M."/>
            <person name="Boutry M."/>
            <person name="Bancroft I."/>
            <person name="Vos P."/>
            <person name="Hoheisel J."/>
            <person name="Zimmermann W."/>
            <person name="Wedler H."/>
            <person name="Ridley P."/>
            <person name="Langham S.-A."/>
            <person name="McCullagh B."/>
            <person name="Bilham L."/>
            <person name="Robben J."/>
            <person name="van der Schueren J."/>
            <person name="Grymonprez B."/>
            <person name="Chuang Y.-J."/>
            <person name="Vandenbussche F."/>
            <person name="Braeken M."/>
            <person name="Weltjens I."/>
            <person name="Voet M."/>
            <person name="Bastiaens I."/>
            <person name="Aert R."/>
            <person name="Defoor E."/>
            <person name="Weitzenegger T."/>
            <person name="Bothe G."/>
            <person name="Ramsperger U."/>
            <person name="Hilbert H."/>
            <person name="Braun M."/>
            <person name="Holzer E."/>
            <person name="Brandt A."/>
            <person name="Peters S."/>
            <person name="van Staveren M."/>
            <person name="Dirkse W."/>
            <person name="Mooijman P."/>
            <person name="Klein Lankhorst R."/>
            <person name="Rose M."/>
            <person name="Hauf J."/>
            <person name="Koetter P."/>
            <person name="Berneiser S."/>
            <person name="Hempel S."/>
            <person name="Feldpausch M."/>
            <person name="Lamberth S."/>
            <person name="Van den Daele H."/>
            <person name="De Keyser A."/>
            <person name="Buysshaert C."/>
            <person name="Gielen J."/>
            <person name="Villarroel R."/>
            <person name="De Clercq R."/>
            <person name="van Montagu M."/>
            <person name="Rogers J."/>
            <person name="Cronin A."/>
            <person name="Quail M.A."/>
            <person name="Bray-Allen S."/>
            <person name="Clark L."/>
            <person name="Doggett J."/>
            <person name="Hall S."/>
            <person name="Kay M."/>
            <person name="Lennard N."/>
            <person name="McLay K."/>
            <person name="Mayes R."/>
            <person name="Pettett A."/>
            <person name="Rajandream M.A."/>
            <person name="Lyne M."/>
            <person name="Benes V."/>
            <person name="Rechmann S."/>
            <person name="Borkova D."/>
            <person name="Bloecker H."/>
            <person name="Scharfe M."/>
            <person name="Grimm M."/>
            <person name="Loehnert T.-H."/>
            <person name="Dose S."/>
            <person name="de Haan M."/>
            <person name="Maarse A.C."/>
            <person name="Schaefer M."/>
            <person name="Mueller-Auer S."/>
            <person name="Gabel C."/>
            <person name="Fuchs M."/>
            <person name="Fartmann B."/>
            <person name="Granderath K."/>
            <person name="Dauner D."/>
            <person name="Herzl A."/>
            <person name="Neumann S."/>
            <person name="Argiriou A."/>
            <person name="Vitale D."/>
            <person name="Liguori R."/>
            <person name="Piravandi E."/>
            <person name="Massenet O."/>
            <person name="Quigley F."/>
            <person name="Clabauld G."/>
            <person name="Muendlein A."/>
            <person name="Felber R."/>
            <person name="Schnabl S."/>
            <person name="Hiller R."/>
            <person name="Schmidt W."/>
            <person name="Lecharny A."/>
            <person name="Aubourg S."/>
            <person name="Chefdor F."/>
            <person name="Cooke R."/>
            <person name="Berger C."/>
            <person name="Monfort A."/>
            <person name="Casacuberta E."/>
            <person name="Gibbons T."/>
            <person name="Weber N."/>
            <person name="Vandenbol M."/>
            <person name="Bargues M."/>
            <person name="Terol J."/>
            <person name="Torres A."/>
            <person name="Perez-Perez A."/>
            <person name="Purnelle B."/>
            <person name="Bent E."/>
            <person name="Johnson S."/>
            <person name="Tacon D."/>
            <person name="Jesse T."/>
            <person name="Heijnen L."/>
            <person name="Schwarz S."/>
            <person name="Scholler P."/>
            <person name="Heber S."/>
            <person name="Francs P."/>
            <person name="Bielke C."/>
            <person name="Frishman D."/>
            <person name="Haase D."/>
            <person name="Lemcke K."/>
            <person name="Mewes H.-W."/>
            <person name="Stocker S."/>
            <person name="Zaccaria P."/>
            <person name="Bevan M."/>
            <person name="Wilson R.K."/>
            <person name="de la Bastide M."/>
            <person name="Habermann K."/>
            <person name="Parnell L."/>
            <person name="Dedhia N."/>
            <person name="Gnoj L."/>
            <person name="Schutz K."/>
            <person name="Huang E."/>
            <person name="Spiegel L."/>
            <person name="Sekhon M."/>
            <person name="Murray J."/>
            <person name="Sheet P."/>
            <person name="Cordes M."/>
            <person name="Abu-Threideh J."/>
            <person name="Stoneking T."/>
            <person name="Kalicki J."/>
            <person name="Graves T."/>
            <person name="Harmon G."/>
            <person name="Edwards J."/>
            <person name="Latreille P."/>
            <person name="Courtney L."/>
            <person name="Cloud J."/>
            <person name="Abbott A."/>
            <person name="Scott K."/>
            <person name="Johnson D."/>
            <person name="Minx P."/>
            <person name="Bentley D."/>
            <person name="Fulton B."/>
            <person name="Miller N."/>
            <person name="Greco T."/>
            <person name="Kemp K."/>
            <person name="Kramer J."/>
            <person name="Fulton L."/>
            <person name="Mardis E."/>
            <person name="Dante M."/>
            <person name="Pepin K."/>
            <person name="Hillier L.W."/>
            <person name="Nelson J."/>
            <person name="Spieth J."/>
            <person name="Ryan E."/>
            <person name="Andrews S."/>
            <person name="Geisel C."/>
            <person name="Layman D."/>
            <person name="Du H."/>
            <person name="Ali J."/>
            <person name="Berghoff A."/>
            <person name="Jones K."/>
            <person name="Drone K."/>
            <person name="Cotton M."/>
            <person name="Joshu C."/>
            <person name="Antonoiu B."/>
            <person name="Zidanic M."/>
            <person name="Strong C."/>
            <person name="Sun H."/>
            <person name="Lamar B."/>
            <person name="Yordan C."/>
            <person name="Ma P."/>
            <person name="Zhong J."/>
            <person name="Preston R."/>
            <person name="Vil D."/>
            <person name="Shekher M."/>
            <person name="Matero A."/>
            <person name="Shah R."/>
            <person name="Swaby I.K."/>
            <person name="O'Shaughnessy A."/>
            <person name="Rodriguez M."/>
            <person name="Hoffman J."/>
            <person name="Till S."/>
            <person name="Granat S."/>
            <person name="Shohdy N."/>
            <person name="Hasegawa A."/>
            <person name="Hameed A."/>
            <person name="Lodhi M."/>
            <person name="Johnson A."/>
            <person name="Chen E."/>
            <person name="Marra M.A."/>
            <person name="Martienssen R."/>
            <person name="McCombie W.R."/>
        </authorList>
    </citation>
    <scope>NUCLEOTIDE SEQUENCE [LARGE SCALE GENOMIC DNA]</scope>
    <source>
        <strain>cv. Columbia</strain>
    </source>
</reference>
<reference key="2">
    <citation type="journal article" date="2017" name="Plant J.">
        <title>Araport11: a complete reannotation of the Arabidopsis thaliana reference genome.</title>
        <authorList>
            <person name="Cheng C.Y."/>
            <person name="Krishnakumar V."/>
            <person name="Chan A.P."/>
            <person name="Thibaud-Nissen F."/>
            <person name="Schobel S."/>
            <person name="Town C.D."/>
        </authorList>
    </citation>
    <scope>GENOME REANNOTATION</scope>
    <source>
        <strain>cv. Columbia</strain>
    </source>
</reference>
<reference key="3">
    <citation type="journal article" date="2006" name="Plant Biotechnol. J.">
        <title>Simultaneous high-throughput recombinational cloning of open reading frames in closed and open configurations.</title>
        <authorList>
            <person name="Underwood B.A."/>
            <person name="Vanderhaeghen R."/>
            <person name="Whitford R."/>
            <person name="Town C.D."/>
            <person name="Hilson P."/>
        </authorList>
    </citation>
    <scope>NUCLEOTIDE SEQUENCE [LARGE SCALE MRNA]</scope>
    <source>
        <strain>cv. Columbia</strain>
    </source>
</reference>
<reference key="4">
    <citation type="journal article" date="2003" name="Plant Cell">
        <title>Overexpression of a novel class of gibberellin 2-oxidases decreases gibberellin levels and creates dwarf plants.</title>
        <authorList>
            <person name="Schomburg F.M."/>
            <person name="Bizzell C.M."/>
            <person name="Lee D.J."/>
            <person name="Zeevaart J.A.D."/>
            <person name="Amasino R.M."/>
        </authorList>
    </citation>
    <scope>FUNCTION</scope>
    <scope>CHARACTERIZATION</scope>
</reference>
<reference key="5">
    <citation type="journal article" date="2006" name="Plant Physiol.">
        <title>Transcriptional regulation of gibberellin metabolism genes by auxin signaling in Arabidopsis.</title>
        <authorList>
            <person name="Frigerio M."/>
            <person name="Alabadi D."/>
            <person name="Perez-Gomez J."/>
            <person name="Garcia-Carcel L."/>
            <person name="Phillips A.L."/>
            <person name="Hedden P."/>
            <person name="Blazquez M.A."/>
        </authorList>
    </citation>
    <scope>INDUCTION BY AUXIN AND PACLOBUTRAZOL</scope>
</reference>
<reference key="6">
    <citation type="journal article" date="2011" name="Gene">
        <title>Evolutionary analysis of three gibberellin oxidase genes in rice, Arabidopsis, and soybean.</title>
        <authorList>
            <person name="Han F."/>
            <person name="Zhu B."/>
        </authorList>
    </citation>
    <scope>GENE FAMILY</scope>
</reference>
<proteinExistence type="evidence at protein level"/>
<sequence>MDPPFNEIYNNLLYNQITKKDNDVSEIPFSFSVTAVVEEVELPVIDVSRLIDGAEEEREKCKEAIARASREWGFFQVINHGISMDVLEKMRQEQIRVFREPFDKKSKSEKFSAGSYRWGTPSATSIRQLSWSEAFHVPMTDISDNKDFTTLSSTMEKFASESEALAYMLAEVLAEKSGQNSSFFKENCVRNTCYLRMNRYPPCPKPSEVYGLMPHTDSDFLTILYQDQVGGLQLIKDNRWIAVKPNPKALIINIGDLFQAWSNGMYKSVEHRVMTNPKVERFSTAYFMCPSYDAVIECSSDRPAYRNFSFREFRQQVQEDVKKFGFKVGLPRFLNHVY</sequence>
<protein>
    <recommendedName>
        <fullName>Gibberellin 2-beta-dioxygenase 8</fullName>
        <ecNumber>1.14.11.13</ecNumber>
    </recommendedName>
    <alternativeName>
        <fullName>GA 2-oxidase 8</fullName>
    </alternativeName>
    <alternativeName>
        <fullName>Gibberellin 2-beta-hydroxylase 8</fullName>
    </alternativeName>
    <alternativeName>
        <fullName>Gibberellin 2-oxidase 8</fullName>
    </alternativeName>
</protein>
<evidence type="ECO:0000255" key="1"/>
<evidence type="ECO:0000255" key="2">
    <source>
        <dbReference type="PROSITE-ProRule" id="PRU00805"/>
    </source>
</evidence>
<evidence type="ECO:0000269" key="3">
    <source>
    </source>
</evidence>
<evidence type="ECO:0000269" key="4">
    <source>
    </source>
</evidence>
<evidence type="ECO:0000305" key="5"/>
<comment type="function">
    <text evidence="3">Catalyzes the 2-beta-hydroxylation of gibberellins (GA) precursors, rendering them unable to be converted to active GAs. Hydroxylates the C20-GA GA12 and GA53, but is not active on C19-GAs, like GA1, GA4, GA9 and GA20.</text>
</comment>
<comment type="catalytic activity">
    <reaction>
        <text>gibberellin A1 + 2-oxoglutarate + O2 = gibberellin A8 + succinate + CO2</text>
        <dbReference type="Rhea" id="RHEA:15005"/>
        <dbReference type="ChEBI" id="CHEBI:15379"/>
        <dbReference type="ChEBI" id="CHEBI:16526"/>
        <dbReference type="ChEBI" id="CHEBI:16810"/>
        <dbReference type="ChEBI" id="CHEBI:30031"/>
        <dbReference type="ChEBI" id="CHEBI:58524"/>
        <dbReference type="ChEBI" id="CHEBI:58594"/>
        <dbReference type="EC" id="1.14.11.13"/>
    </reaction>
</comment>
<comment type="cofactor">
    <cofactor evidence="2">
        <name>Fe(2+)</name>
        <dbReference type="ChEBI" id="CHEBI:29033"/>
    </cofactor>
    <text evidence="2">Binds 1 Fe(2+) ion per subunit.</text>
</comment>
<comment type="pathway">
    <text>Plant hormone biosynthesis; gibberellin biosynthesis.</text>
</comment>
<comment type="alternative products">
    <event type="alternative splicing"/>
    <isoform>
        <id>O49561-1</id>
        <name>1</name>
        <sequence type="displayed"/>
    </isoform>
    <text>A number of isoforms are produced. According to EST sequences.</text>
</comment>
<comment type="induction">
    <text evidence="4">Up-regulated by auxin. Down-regulated by paclobutrazol.</text>
</comment>
<comment type="similarity">
    <text evidence="5">Belongs to the iron/ascorbate-dependent oxidoreductase family. GA2OX subfamily.</text>
</comment>
<comment type="sequence caution" evidence="5">
    <conflict type="erroneous termination">
        <sequence resource="EMBL-CDS" id="ABK28642"/>
    </conflict>
    <text>Extended C-terminus.</text>
</comment>
<comment type="sequence caution" evidence="5">
    <conflict type="erroneous gene model prediction">
        <sequence resource="EMBL-CDS" id="CAA17539"/>
    </conflict>
</comment>
<comment type="sequence caution" evidence="5">
    <conflict type="erroneous gene model prediction">
        <sequence resource="EMBL-CDS" id="CAB79120"/>
    </conflict>
</comment>
<feature type="chain" id="PRO_0000067309" description="Gibberellin 2-beta-dioxygenase 8">
    <location>
        <begin position="1"/>
        <end position="338"/>
    </location>
</feature>
<feature type="domain" description="Fe2OG dioxygenase" evidence="2">
    <location>
        <begin position="191"/>
        <end position="290"/>
    </location>
</feature>
<feature type="active site" evidence="1">
    <location>
        <position position="281"/>
    </location>
</feature>
<feature type="binding site" evidence="2">
    <location>
        <position position="215"/>
    </location>
    <ligand>
        <name>Fe cation</name>
        <dbReference type="ChEBI" id="CHEBI:24875"/>
    </ligand>
</feature>
<feature type="binding site" evidence="2">
    <location>
        <position position="217"/>
    </location>
    <ligand>
        <name>Fe cation</name>
        <dbReference type="ChEBI" id="CHEBI:24875"/>
    </ligand>
</feature>
<feature type="binding site" evidence="2">
    <location>
        <position position="271"/>
    </location>
    <ligand>
        <name>Fe cation</name>
        <dbReference type="ChEBI" id="CHEBI:24875"/>
    </ligand>
</feature>
<feature type="binding site" evidence="2">
    <location>
        <position position="281"/>
    </location>
    <ligand>
        <name>2-oxoglutarate</name>
        <dbReference type="ChEBI" id="CHEBI:16810"/>
    </ligand>
</feature>
<accession>O49561</accession>
<accession>A0MF87</accession>
<accession>Q1PE62</accession>
<dbReference type="EC" id="1.14.11.13"/>
<dbReference type="EMBL" id="AL021960">
    <property type="protein sequence ID" value="CAA17539.1"/>
    <property type="status" value="ALT_SEQ"/>
    <property type="molecule type" value="Genomic_DNA"/>
</dbReference>
<dbReference type="EMBL" id="AL161554">
    <property type="protein sequence ID" value="CAB79120.1"/>
    <property type="status" value="ALT_SEQ"/>
    <property type="molecule type" value="Genomic_DNA"/>
</dbReference>
<dbReference type="EMBL" id="CP002687">
    <property type="protein sequence ID" value="AEE84420.1"/>
    <property type="molecule type" value="Genomic_DNA"/>
</dbReference>
<dbReference type="EMBL" id="DQ446856">
    <property type="protein sequence ID" value="ABE66080.1"/>
    <property type="molecule type" value="mRNA"/>
</dbReference>
<dbReference type="EMBL" id="DQ653213">
    <property type="protein sequence ID" value="ABK28642.1"/>
    <property type="status" value="ALT_SEQ"/>
    <property type="molecule type" value="mRNA"/>
</dbReference>
<dbReference type="PIR" id="T04951">
    <property type="entry name" value="T04951"/>
</dbReference>
<dbReference type="RefSeq" id="NP_193852.2">
    <molecule id="O49561-1"/>
    <property type="nucleotide sequence ID" value="NM_118239.3"/>
</dbReference>
<dbReference type="SMR" id="O49561"/>
<dbReference type="STRING" id="3702.O49561"/>
<dbReference type="PaxDb" id="3702-AT4G21200.1"/>
<dbReference type="EnsemblPlants" id="AT4G21200.1">
    <molecule id="O49561-1"/>
    <property type="protein sequence ID" value="AT4G21200.1"/>
    <property type="gene ID" value="AT4G21200"/>
</dbReference>
<dbReference type="GeneID" id="827868"/>
<dbReference type="Gramene" id="AT4G21200.1">
    <molecule id="O49561-1"/>
    <property type="protein sequence ID" value="AT4G21200.1"/>
    <property type="gene ID" value="AT4G21200"/>
</dbReference>
<dbReference type="KEGG" id="ath:AT4G21200"/>
<dbReference type="Araport" id="AT4G21200"/>
<dbReference type="TAIR" id="AT4G21200">
    <property type="gene designation" value="GA2OX8"/>
</dbReference>
<dbReference type="eggNOG" id="KOG0143">
    <property type="taxonomic scope" value="Eukaryota"/>
</dbReference>
<dbReference type="HOGENOM" id="CLU_010119_15_1_1"/>
<dbReference type="InParanoid" id="O49561"/>
<dbReference type="OMA" id="KPFHEKM"/>
<dbReference type="PhylomeDB" id="O49561"/>
<dbReference type="BRENDA" id="1.14.11.13">
    <property type="organism ID" value="399"/>
</dbReference>
<dbReference type="UniPathway" id="UPA00390"/>
<dbReference type="PRO" id="PR:O49561"/>
<dbReference type="Proteomes" id="UP000006548">
    <property type="component" value="Chromosome 4"/>
</dbReference>
<dbReference type="ExpressionAtlas" id="O49561">
    <property type="expression patterns" value="baseline and differential"/>
</dbReference>
<dbReference type="GO" id="GO:0005737">
    <property type="term" value="C:cytoplasm"/>
    <property type="evidence" value="ECO:0007669"/>
    <property type="project" value="EnsemblPlants"/>
</dbReference>
<dbReference type="GO" id="GO:0005634">
    <property type="term" value="C:nucleus"/>
    <property type="evidence" value="ECO:0007669"/>
    <property type="project" value="EnsemblPlants"/>
</dbReference>
<dbReference type="GO" id="GO:0045543">
    <property type="term" value="F:gibberellin 2-beta-dioxygenase activity"/>
    <property type="evidence" value="ECO:0007669"/>
    <property type="project" value="UniProtKB-EC"/>
</dbReference>
<dbReference type="GO" id="GO:0046872">
    <property type="term" value="F:metal ion binding"/>
    <property type="evidence" value="ECO:0007669"/>
    <property type="project" value="UniProtKB-KW"/>
</dbReference>
<dbReference type="GO" id="GO:0010336">
    <property type="term" value="P:gibberellic acid homeostasis"/>
    <property type="evidence" value="ECO:0007669"/>
    <property type="project" value="EnsemblPlants"/>
</dbReference>
<dbReference type="GO" id="GO:0009686">
    <property type="term" value="P:gibberellin biosynthetic process"/>
    <property type="evidence" value="ECO:0007669"/>
    <property type="project" value="UniProtKB-UniPathway"/>
</dbReference>
<dbReference type="GO" id="GO:0045487">
    <property type="term" value="P:gibberellin catabolic process"/>
    <property type="evidence" value="ECO:0007669"/>
    <property type="project" value="EnsemblPlants"/>
</dbReference>
<dbReference type="GO" id="GO:0009685">
    <property type="term" value="P:gibberellin metabolic process"/>
    <property type="evidence" value="ECO:0000314"/>
    <property type="project" value="TAIR"/>
</dbReference>
<dbReference type="FunFam" id="2.60.120.330:FF:000021">
    <property type="entry name" value="Gibberellin 2-beta-dioxygenase 8"/>
    <property type="match status" value="1"/>
</dbReference>
<dbReference type="Gene3D" id="2.60.120.330">
    <property type="entry name" value="B-lactam Antibiotic, Isopenicillin N Synthase, Chain"/>
    <property type="match status" value="1"/>
</dbReference>
<dbReference type="InterPro" id="IPR026992">
    <property type="entry name" value="DIOX_N"/>
</dbReference>
<dbReference type="InterPro" id="IPR044861">
    <property type="entry name" value="IPNS-like_FE2OG_OXY"/>
</dbReference>
<dbReference type="InterPro" id="IPR027443">
    <property type="entry name" value="IPNS-like_sf"/>
</dbReference>
<dbReference type="InterPro" id="IPR050231">
    <property type="entry name" value="Iron_ascorbate_oxido_reductase"/>
</dbReference>
<dbReference type="InterPro" id="IPR005123">
    <property type="entry name" value="Oxoglu/Fe-dep_dioxygenase_dom"/>
</dbReference>
<dbReference type="PANTHER" id="PTHR47990">
    <property type="entry name" value="2-OXOGLUTARATE (2OG) AND FE(II)-DEPENDENT OXYGENASE SUPERFAMILY PROTEIN-RELATED"/>
    <property type="match status" value="1"/>
</dbReference>
<dbReference type="Pfam" id="PF03171">
    <property type="entry name" value="2OG-FeII_Oxy"/>
    <property type="match status" value="1"/>
</dbReference>
<dbReference type="Pfam" id="PF14226">
    <property type="entry name" value="DIOX_N"/>
    <property type="match status" value="1"/>
</dbReference>
<dbReference type="SUPFAM" id="SSF51197">
    <property type="entry name" value="Clavaminate synthase-like"/>
    <property type="match status" value="1"/>
</dbReference>
<dbReference type="PROSITE" id="PS51471">
    <property type="entry name" value="FE2OG_OXY"/>
    <property type="match status" value="1"/>
</dbReference>